<protein>
    <recommendedName>
        <fullName evidence="6">FAD-dependent monooxygenase janM</fullName>
        <ecNumber evidence="8">1.-.-.-</ecNumber>
    </recommendedName>
    <alternativeName>
        <fullName evidence="6">Janthitremanes biosynthesis cluster protein M</fullName>
    </alternativeName>
</protein>
<reference key="1">
    <citation type="journal article" date="2015" name="Toxins">
        <title>Molecular cloning and functional analysis of gene clusters for the biosynthesis of indole-diterpenes in Penicillium crustosum and P. janthinellum.</title>
        <authorList>
            <person name="Nicholson M.J."/>
            <person name="Eaton C.J."/>
            <person name="Starkel C."/>
            <person name="Tapper B.A."/>
            <person name="Cox M.P."/>
            <person name="Scott B."/>
        </authorList>
    </citation>
    <scope>NUCLEOTIDE SEQUENCE [GENOMIC DNA]</scope>
    <scope>IDENTIFICATION</scope>
    <scope>FUNCTION</scope>
    <scope>PATHWAY</scope>
    <source>
        <strain>PN2408</strain>
    </source>
</reference>
<dbReference type="EC" id="1.-.-.-" evidence="8"/>
<dbReference type="EMBL" id="KF280651">
    <property type="protein sequence ID" value="AGZ20480.1"/>
    <property type="molecule type" value="Genomic_DNA"/>
</dbReference>
<dbReference type="SMR" id="A0A0E3D8L5"/>
<dbReference type="GlyCosmos" id="A0A0E3D8L5">
    <property type="glycosylation" value="1 site, No reported glycans"/>
</dbReference>
<dbReference type="GO" id="GO:0016020">
    <property type="term" value="C:membrane"/>
    <property type="evidence" value="ECO:0007669"/>
    <property type="project" value="UniProtKB-SubCell"/>
</dbReference>
<dbReference type="GO" id="GO:0071949">
    <property type="term" value="F:FAD binding"/>
    <property type="evidence" value="ECO:0007669"/>
    <property type="project" value="InterPro"/>
</dbReference>
<dbReference type="GO" id="GO:0004497">
    <property type="term" value="F:monooxygenase activity"/>
    <property type="evidence" value="ECO:0007669"/>
    <property type="project" value="UniProtKB-KW"/>
</dbReference>
<dbReference type="Gene3D" id="3.50.50.60">
    <property type="entry name" value="FAD/NAD(P)-binding domain"/>
    <property type="match status" value="1"/>
</dbReference>
<dbReference type="InterPro" id="IPR002938">
    <property type="entry name" value="FAD-bd"/>
</dbReference>
<dbReference type="InterPro" id="IPR036188">
    <property type="entry name" value="FAD/NAD-bd_sf"/>
</dbReference>
<dbReference type="InterPro" id="IPR050562">
    <property type="entry name" value="FAD_mOase_fung"/>
</dbReference>
<dbReference type="PANTHER" id="PTHR47356:SF2">
    <property type="entry name" value="FAD-BINDING DOMAIN-CONTAINING PROTEIN-RELATED"/>
    <property type="match status" value="1"/>
</dbReference>
<dbReference type="PANTHER" id="PTHR47356">
    <property type="entry name" value="FAD-DEPENDENT MONOOXYGENASE ASQG-RELATED"/>
    <property type="match status" value="1"/>
</dbReference>
<dbReference type="Pfam" id="PF01494">
    <property type="entry name" value="FAD_binding_3"/>
    <property type="match status" value="1"/>
</dbReference>
<dbReference type="PRINTS" id="PR00420">
    <property type="entry name" value="RNGMNOXGNASE"/>
</dbReference>
<dbReference type="SUPFAM" id="SSF51905">
    <property type="entry name" value="FAD/NAD(P)-binding domain"/>
    <property type="match status" value="1"/>
</dbReference>
<sequence>MSKSEFQVIIVGGSIGGLTLAHCLRRAGIDHIILEKSSSPAPQIGASIGILPNGARILDQLQLWSEVEDYIEPLSTATIGLPDGFSFSSSYPQIINERFGFPIAFLDRQLLLEILYQRYPDRSKIRLEEKVTAVETSDSGATVTTSNGSVYRGGLVVGADGVHSIVRREIWRASKKLSSGLTAEFRCIFGISSAIKGLNVGEQVNALFDGLTIVTIHGKNGRVYWFVIQKLDKKYIYPNCPRYTKHDTTVAAEQLRNIQFYRDITFGQVWENRETASMTVLEENTFKTWHYGRLVLLGDSVHKMTPNIGQGANMAIEDAAALTNLLHNLQKISGTLSSTAAQIETILRQYRRIRYERVESIYRDSRFLVRFQARDGLLNILLSRYYAPYAGDLPADMASKTIADGVMCDFLPPPKRSGDGWKRYRRDGQLRGWRFHAMLCILMLAILYTWVGRTNLDSIVFSACGSLFQKLSVPT</sequence>
<keyword id="KW-0274">FAD</keyword>
<keyword id="KW-0285">Flavoprotein</keyword>
<keyword id="KW-0325">Glycoprotein</keyword>
<keyword id="KW-0472">Membrane</keyword>
<keyword id="KW-0503">Monooxygenase</keyword>
<keyword id="KW-0560">Oxidoreductase</keyword>
<keyword id="KW-0812">Transmembrane</keyword>
<keyword id="KW-1133">Transmembrane helix</keyword>
<feature type="chain" id="PRO_0000446563" description="FAD-dependent monooxygenase janM">
    <location>
        <begin position="1"/>
        <end position="475"/>
    </location>
</feature>
<feature type="transmembrane region" description="Helical" evidence="3">
    <location>
        <begin position="8"/>
        <end position="24"/>
    </location>
</feature>
<feature type="transmembrane region" description="Helical" evidence="3">
    <location>
        <begin position="432"/>
        <end position="451"/>
    </location>
</feature>
<feature type="binding site" evidence="2">
    <location>
        <position position="35"/>
    </location>
    <ligand>
        <name>FAD</name>
        <dbReference type="ChEBI" id="CHEBI:57692"/>
    </ligand>
</feature>
<feature type="binding site" evidence="2">
    <location>
        <position position="49"/>
    </location>
    <ligand>
        <name>FAD</name>
        <dbReference type="ChEBI" id="CHEBI:57692"/>
    </ligand>
</feature>
<feature type="binding site" evidence="2">
    <location>
        <position position="108"/>
    </location>
    <ligand>
        <name>FAD</name>
        <dbReference type="ChEBI" id="CHEBI:57692"/>
    </ligand>
</feature>
<feature type="binding site" evidence="2">
    <location>
        <position position="299"/>
    </location>
    <ligand>
        <name>FAD</name>
        <dbReference type="ChEBI" id="CHEBI:57692"/>
    </ligand>
</feature>
<feature type="binding site" evidence="2">
    <location>
        <position position="312"/>
    </location>
    <ligand>
        <name>FAD</name>
        <dbReference type="ChEBI" id="CHEBI:57692"/>
    </ligand>
</feature>
<feature type="glycosylation site" description="N-linked (GlcNAc...) asparagine" evidence="4">
    <location>
        <position position="147"/>
    </location>
</feature>
<name>JANM_PENJA</name>
<accession>A0A0E3D8L5</accession>
<evidence type="ECO:0000250" key="1">
    <source>
        <dbReference type="UniProtKB" id="A6T923"/>
    </source>
</evidence>
<evidence type="ECO:0000250" key="2">
    <source>
        <dbReference type="UniProtKB" id="B8M9J8"/>
    </source>
</evidence>
<evidence type="ECO:0000255" key="3"/>
<evidence type="ECO:0000255" key="4">
    <source>
        <dbReference type="PROSITE-ProRule" id="PRU00498"/>
    </source>
</evidence>
<evidence type="ECO:0000269" key="5">
    <source>
    </source>
</evidence>
<evidence type="ECO:0000303" key="6">
    <source>
    </source>
</evidence>
<evidence type="ECO:0000305" key="7"/>
<evidence type="ECO:0000305" key="8">
    <source>
    </source>
</evidence>
<gene>
    <name evidence="6" type="primary">janM</name>
</gene>
<organism>
    <name type="scientific">Penicillium janthinellum</name>
    <name type="common">Penicillium vitale</name>
    <dbReference type="NCBI Taxonomy" id="5079"/>
    <lineage>
        <taxon>Eukaryota</taxon>
        <taxon>Fungi</taxon>
        <taxon>Dikarya</taxon>
        <taxon>Ascomycota</taxon>
        <taxon>Pezizomycotina</taxon>
        <taxon>Eurotiomycetes</taxon>
        <taxon>Eurotiomycetidae</taxon>
        <taxon>Eurotiales</taxon>
        <taxon>Aspergillaceae</taxon>
        <taxon>Penicillium</taxon>
    </lineage>
</organism>
<comment type="function">
    <text evidence="5 8">FAD-dependent monooxygenase; part of the gene cluster that mediates the biosynthesis of the indole diterpenes janthitremanes such as shearinine K or shearinine A (PubMed:26213965). The geranylgeranyl diphosphate (GGPP) synthase janG catalyzes the first step in janthitremane biosynthesis via conversion of farnesyl pyrophosphate and isopentyl pyrophosphate into geranylgeranyl pyrophosphate (GGPP) (PubMed:26213965). Condensation of indole-3-glycerol phosphate with GGPP by the prenyl transferase janC then forms 3-geranylgeranylindole (3-GGI) (PubMed:26213965). Epoxidation by the FAD-dependent monooxygenase janM leads to a epoxidized-GGI that is substrate of the terpene cyclase janB for cyclization to yield paspaline (PubMed:26213965). Paspaline is subsequently converted to 13-desoxypaspaline by the cytochrome P450 monooxygenase janP, via beta-PC-M6 in a series of alpha-face oxidations (Probable). The cytochrome P450 monooxygenase janQ is proposed to carry out sequential beta-face oxidation steps at C-7 and C-13 of 13-desoxypaspaline to form paspalicine and paspalinine respectively (Probable). The indole diterpene prenyltransferase janD may then convert paspalinine into shearinine K which is substrate of janO and/or additional enzymes for oxidation and cyclization to generate shearinine A (Probable).</text>
</comment>
<comment type="cofactor">
    <cofactor evidence="1">
        <name>FAD</name>
        <dbReference type="ChEBI" id="CHEBI:57692"/>
    </cofactor>
</comment>
<comment type="pathway">
    <text evidence="5">Secondary metabolite biosynthesis.</text>
</comment>
<comment type="subcellular location">
    <subcellularLocation>
        <location evidence="3">Membrane</location>
        <topology evidence="3">Multi-pass membrane protein</topology>
    </subcellularLocation>
</comment>
<comment type="similarity">
    <text evidence="7">Belongs to the paxM FAD-dependent monooxygenase family.</text>
</comment>
<proteinExistence type="inferred from homology"/>